<protein>
    <recommendedName>
        <fullName evidence="1">Phosphoenolpyruvate carboxylase</fullName>
        <shortName evidence="1">PEPC</shortName>
        <shortName evidence="1">PEPCase</shortName>
        <ecNumber evidence="1">4.1.1.31</ecNumber>
    </recommendedName>
</protein>
<gene>
    <name evidence="1" type="primary">ppc</name>
    <name type="ordered locus">SDY_3791</name>
</gene>
<evidence type="ECO:0000255" key="1">
    <source>
        <dbReference type="HAMAP-Rule" id="MF_00595"/>
    </source>
</evidence>
<feature type="chain" id="PRO_1000025589" description="Phosphoenolpyruvate carboxylase">
    <location>
        <begin position="1"/>
        <end position="883"/>
    </location>
</feature>
<feature type="active site" evidence="1">
    <location>
        <position position="138"/>
    </location>
</feature>
<feature type="active site" evidence="1">
    <location>
        <position position="546"/>
    </location>
</feature>
<comment type="function">
    <text evidence="1">Forms oxaloacetate, a four-carbon dicarboxylic acid source for the tricarboxylic acid cycle.</text>
</comment>
<comment type="catalytic activity">
    <reaction evidence="1">
        <text>oxaloacetate + phosphate = phosphoenolpyruvate + hydrogencarbonate</text>
        <dbReference type="Rhea" id="RHEA:28370"/>
        <dbReference type="ChEBI" id="CHEBI:16452"/>
        <dbReference type="ChEBI" id="CHEBI:17544"/>
        <dbReference type="ChEBI" id="CHEBI:43474"/>
        <dbReference type="ChEBI" id="CHEBI:58702"/>
        <dbReference type="EC" id="4.1.1.31"/>
    </reaction>
</comment>
<comment type="cofactor">
    <cofactor evidence="1">
        <name>Mg(2+)</name>
        <dbReference type="ChEBI" id="CHEBI:18420"/>
    </cofactor>
</comment>
<comment type="similarity">
    <text evidence="1">Belongs to the PEPCase type 1 family.</text>
</comment>
<proteinExistence type="inferred from homology"/>
<dbReference type="EC" id="4.1.1.31" evidence="1"/>
<dbReference type="EMBL" id="CP000034">
    <property type="protein sequence ID" value="ABB63736.1"/>
    <property type="molecule type" value="Genomic_DNA"/>
</dbReference>
<dbReference type="RefSeq" id="WP_001005574.1">
    <property type="nucleotide sequence ID" value="NC_007606.1"/>
</dbReference>
<dbReference type="RefSeq" id="YP_405227.1">
    <property type="nucleotide sequence ID" value="NC_007606.1"/>
</dbReference>
<dbReference type="SMR" id="Q32AB9"/>
<dbReference type="STRING" id="300267.SDY_3791"/>
<dbReference type="EnsemblBacteria" id="ABB63736">
    <property type="protein sequence ID" value="ABB63736"/>
    <property type="gene ID" value="SDY_3791"/>
</dbReference>
<dbReference type="KEGG" id="sdy:SDY_3791"/>
<dbReference type="PATRIC" id="fig|300267.13.peg.4480"/>
<dbReference type="HOGENOM" id="CLU_006557_2_0_6"/>
<dbReference type="Proteomes" id="UP000002716">
    <property type="component" value="Chromosome"/>
</dbReference>
<dbReference type="GO" id="GO:0005829">
    <property type="term" value="C:cytosol"/>
    <property type="evidence" value="ECO:0007669"/>
    <property type="project" value="TreeGrafter"/>
</dbReference>
<dbReference type="GO" id="GO:0000287">
    <property type="term" value="F:magnesium ion binding"/>
    <property type="evidence" value="ECO:0007669"/>
    <property type="project" value="UniProtKB-UniRule"/>
</dbReference>
<dbReference type="GO" id="GO:0008964">
    <property type="term" value="F:phosphoenolpyruvate carboxylase activity"/>
    <property type="evidence" value="ECO:0007669"/>
    <property type="project" value="UniProtKB-UniRule"/>
</dbReference>
<dbReference type="GO" id="GO:0015977">
    <property type="term" value="P:carbon fixation"/>
    <property type="evidence" value="ECO:0007669"/>
    <property type="project" value="UniProtKB-UniRule"/>
</dbReference>
<dbReference type="GO" id="GO:0006107">
    <property type="term" value="P:oxaloacetate metabolic process"/>
    <property type="evidence" value="ECO:0007669"/>
    <property type="project" value="UniProtKB-UniRule"/>
</dbReference>
<dbReference type="GO" id="GO:0006099">
    <property type="term" value="P:tricarboxylic acid cycle"/>
    <property type="evidence" value="ECO:0007669"/>
    <property type="project" value="InterPro"/>
</dbReference>
<dbReference type="FunFam" id="1.20.1440.90:FF:000002">
    <property type="entry name" value="Phosphoenolpyruvate carboxylase"/>
    <property type="match status" value="1"/>
</dbReference>
<dbReference type="Gene3D" id="1.20.1440.90">
    <property type="entry name" value="Phosphoenolpyruvate/pyruvate domain"/>
    <property type="match status" value="1"/>
</dbReference>
<dbReference type="HAMAP" id="MF_00595">
    <property type="entry name" value="PEPcase_type1"/>
    <property type="match status" value="1"/>
</dbReference>
<dbReference type="InterPro" id="IPR021135">
    <property type="entry name" value="PEP_COase"/>
</dbReference>
<dbReference type="InterPro" id="IPR022805">
    <property type="entry name" value="PEP_COase_bac/pln-type"/>
</dbReference>
<dbReference type="InterPro" id="IPR018129">
    <property type="entry name" value="PEP_COase_Lys_AS"/>
</dbReference>
<dbReference type="InterPro" id="IPR033129">
    <property type="entry name" value="PEPCASE_His_AS"/>
</dbReference>
<dbReference type="InterPro" id="IPR015813">
    <property type="entry name" value="Pyrv/PenolPyrv_kinase-like_dom"/>
</dbReference>
<dbReference type="NCBIfam" id="NF000584">
    <property type="entry name" value="PRK00009.1"/>
    <property type="match status" value="1"/>
</dbReference>
<dbReference type="PANTHER" id="PTHR30523">
    <property type="entry name" value="PHOSPHOENOLPYRUVATE CARBOXYLASE"/>
    <property type="match status" value="1"/>
</dbReference>
<dbReference type="PANTHER" id="PTHR30523:SF6">
    <property type="entry name" value="PHOSPHOENOLPYRUVATE CARBOXYLASE"/>
    <property type="match status" value="1"/>
</dbReference>
<dbReference type="Pfam" id="PF00311">
    <property type="entry name" value="PEPcase"/>
    <property type="match status" value="1"/>
</dbReference>
<dbReference type="PRINTS" id="PR00150">
    <property type="entry name" value="PEPCARBXLASE"/>
</dbReference>
<dbReference type="SUPFAM" id="SSF51621">
    <property type="entry name" value="Phosphoenolpyruvate/pyruvate domain"/>
    <property type="match status" value="1"/>
</dbReference>
<dbReference type="PROSITE" id="PS00781">
    <property type="entry name" value="PEPCASE_1"/>
    <property type="match status" value="1"/>
</dbReference>
<dbReference type="PROSITE" id="PS00393">
    <property type="entry name" value="PEPCASE_2"/>
    <property type="match status" value="1"/>
</dbReference>
<name>CAPP_SHIDS</name>
<reference key="1">
    <citation type="journal article" date="2005" name="Nucleic Acids Res.">
        <title>Genome dynamics and diversity of Shigella species, the etiologic agents of bacillary dysentery.</title>
        <authorList>
            <person name="Yang F."/>
            <person name="Yang J."/>
            <person name="Zhang X."/>
            <person name="Chen L."/>
            <person name="Jiang Y."/>
            <person name="Yan Y."/>
            <person name="Tang X."/>
            <person name="Wang J."/>
            <person name="Xiong Z."/>
            <person name="Dong J."/>
            <person name="Xue Y."/>
            <person name="Zhu Y."/>
            <person name="Xu X."/>
            <person name="Sun L."/>
            <person name="Chen S."/>
            <person name="Nie H."/>
            <person name="Peng J."/>
            <person name="Xu J."/>
            <person name="Wang Y."/>
            <person name="Yuan Z."/>
            <person name="Wen Y."/>
            <person name="Yao Z."/>
            <person name="Shen Y."/>
            <person name="Qiang B."/>
            <person name="Hou Y."/>
            <person name="Yu J."/>
            <person name="Jin Q."/>
        </authorList>
    </citation>
    <scope>NUCLEOTIDE SEQUENCE [LARGE SCALE GENOMIC DNA]</scope>
    <source>
        <strain>Sd197</strain>
    </source>
</reference>
<accession>Q32AB9</accession>
<keyword id="KW-0120">Carbon dioxide fixation</keyword>
<keyword id="KW-0456">Lyase</keyword>
<keyword id="KW-0460">Magnesium</keyword>
<keyword id="KW-1185">Reference proteome</keyword>
<sequence>MNEQYSALRSNVSMLGKVLGETIKDALGEHILERVETIRKLSKSSRAGNDANRQELLTTLQNLSNDELLPVARAFSQFLNLANTAEQYHSISPKGEAASNPEVIARTLRKLKNQPELSEDTIKKAVESLSLELVLTAHPTEITRRTLIHKMVEVNACLKQLDNKDIADYEHNQLMRRLRQLIAQSWHTDEIRKLRPSPVDEAKWGFAVVENSLWQGVPNYLRELNEQLEENLGYKLPVEFVPVRFTSWMGGDRDGNPNVTADITRHVLLLSRWKATDLFLKDIQVLVSELSMVEATPELLALVGEEGAAEPYRYLMKNLRSRLMATQAWLEARLKGEELPKPEGLLTQNEELWEPLYACYQSLQACGMGIIANGDLLDTLRRVKCFGVPLVRIDIRQESTRHTEALGELTRYLGIGDYESWSEADKQAFLIRELNSKRPLLPRNWQPSAETREVLDTCQVIAEAPQGSIAAYVISMAKTPSDVLAVHLLLKEAGIGFAMPVAPLFETLDDLNNANDVMTQLLNIDWYRGLIQGKQMVMIGYSDSAKDAGVMAASWAQYQAQDALIKTCEKAGIELTLFHGRGGSIGRGGAPAHAALLSQPPGSLKGGLRVTEQGEMIRFKYGLPEITVSSLSLYTGAILEANLLPPPELKESWRRIMDELSVISCDLYRGYVRENKDFVPYFRSATPEQELGKLPLGSRPAKRRPTGGVESLRAIPWIFAWTQNRLMLPAWLGAGTALQKVVEDGKQSELEAMCRDWPFFSTRLGMLEMVFAKADLWLAEYYDQRLVDKALWPLGKELRNLQEEDIKVVLAIANDSHLMADLPWIAESIQLRNIYTDPLNVLQAELLHRSRQAEKEGQEPDPRVEQALMVTIAGIAAGMRNTG</sequence>
<organism>
    <name type="scientific">Shigella dysenteriae serotype 1 (strain Sd197)</name>
    <dbReference type="NCBI Taxonomy" id="300267"/>
    <lineage>
        <taxon>Bacteria</taxon>
        <taxon>Pseudomonadati</taxon>
        <taxon>Pseudomonadota</taxon>
        <taxon>Gammaproteobacteria</taxon>
        <taxon>Enterobacterales</taxon>
        <taxon>Enterobacteriaceae</taxon>
        <taxon>Shigella</taxon>
    </lineage>
</organism>